<feature type="peptide" id="PRO_0000405863" description="Cyclotide cter-L" evidence="2 3">
    <location>
        <begin position="1"/>
        <end position="29"/>
    </location>
</feature>
<feature type="disulfide bond" evidence="1 2">
    <location>
        <begin position="4"/>
        <end position="20"/>
    </location>
</feature>
<feature type="disulfide bond" evidence="1 2">
    <location>
        <begin position="8"/>
        <end position="22"/>
    </location>
</feature>
<feature type="disulfide bond" evidence="1 2">
    <location>
        <begin position="13"/>
        <end position="27"/>
    </location>
</feature>
<feature type="cross-link" description="Cyclopeptide (His-Asp)" evidence="4">
    <location>
        <begin position="1"/>
        <end position="29"/>
    </location>
</feature>
<feature type="unsure residue" description="I or L" evidence="3">
    <location>
        <position position="11"/>
    </location>
</feature>
<feature type="unsure residue" description="I or L" evidence="3">
    <location>
        <position position="14"/>
    </location>
</feature>
<protein>
    <recommendedName>
        <fullName evidence="4">Cyclotide cter-L</fullName>
    </recommendedName>
</protein>
<keyword id="KW-0903">Direct protein sequencing</keyword>
<keyword id="KW-1015">Disulfide bond</keyword>
<keyword id="KW-0960">Knottin</keyword>
<keyword id="KW-0611">Plant defense</keyword>
<accession>P86852</accession>
<proteinExistence type="evidence at protein level"/>
<evidence type="ECO:0000250" key="1">
    <source>
        <dbReference type="UniProtKB" id="P56254"/>
    </source>
</evidence>
<evidence type="ECO:0000255" key="2">
    <source>
        <dbReference type="PROSITE-ProRule" id="PRU00395"/>
    </source>
</evidence>
<evidence type="ECO:0000269" key="3">
    <source>
    </source>
</evidence>
<evidence type="ECO:0000303" key="4">
    <source>
    </source>
</evidence>
<evidence type="ECO:0000305" key="5"/>
<organism>
    <name type="scientific">Clitoria ternatea</name>
    <name type="common">Butterfly pea</name>
    <dbReference type="NCBI Taxonomy" id="43366"/>
    <lineage>
        <taxon>Eukaryota</taxon>
        <taxon>Viridiplantae</taxon>
        <taxon>Streptophyta</taxon>
        <taxon>Embryophyta</taxon>
        <taxon>Tracheophyta</taxon>
        <taxon>Spermatophyta</taxon>
        <taxon>Magnoliopsida</taxon>
        <taxon>eudicotyledons</taxon>
        <taxon>Gunneridae</taxon>
        <taxon>Pentapetalae</taxon>
        <taxon>rosids</taxon>
        <taxon>fabids</taxon>
        <taxon>Fabales</taxon>
        <taxon>Fabaceae</taxon>
        <taxon>Papilionoideae</taxon>
        <taxon>50 kb inversion clade</taxon>
        <taxon>NPAAA clade</taxon>
        <taxon>indigoferoid/millettioid clade</taxon>
        <taxon>Phaseoleae</taxon>
        <taxon>Clitoria</taxon>
    </lineage>
</organism>
<comment type="function">
    <text evidence="1 2">Probably participates in a plant defense mechanism.</text>
</comment>
<comment type="domain">
    <text evidence="5">The presence of a 'disulfide through disulfide knot' structurally defines this protein as a knottin.</text>
</comment>
<comment type="PTM">
    <text evidence="3">Contains 3 disulfide bonds.</text>
</comment>
<comment type="PTM">
    <text evidence="2 3">This is a cyclic peptide.</text>
</comment>
<comment type="mass spectrometry" mass="3109.39" method="Electrospray" evidence="3"/>
<comment type="similarity">
    <text evidence="2">Belongs to the cyclotide family. Bracelet subfamily.</text>
</comment>
<comment type="caution">
    <text evidence="5">This peptide is cyclic. The start position was chosen by similarity to cyclotide cter-A for which the DNA sequence is known.</text>
</comment>
<reference evidence="5" key="1">
    <citation type="journal article" date="2011" name="ACS Chem. Biol.">
        <title>The discovery of cyclotides in the Fabaceae plant family provides new insights into the cyclization, evolution and distribution of circular proteins.</title>
        <authorList>
            <person name="Poth A.G."/>
            <person name="Colgrave M.L."/>
            <person name="Philip R."/>
            <person name="Kerenga B."/>
            <person name="Daly N.L."/>
            <person name="Anderson M."/>
            <person name="Craik D.J."/>
        </authorList>
    </citation>
    <scope>PROTEIN SEQUENCE</scope>
    <scope>DISULFIDE BONDS</scope>
    <scope>CYCLIZATION</scope>
    <scope>MASS SPECTROMETRY</scope>
    <source>
        <tissue evidence="3">Seed</tissue>
    </source>
</reference>
<sequence length="29" mass="3136">HEPCGESCVFIPCITTVVGCSCKNKVCYD</sequence>
<name>CYCL_CLITE</name>
<dbReference type="SMR" id="P86852"/>
<dbReference type="GO" id="GO:0006952">
    <property type="term" value="P:defense response"/>
    <property type="evidence" value="ECO:0007669"/>
    <property type="project" value="UniProtKB-KW"/>
</dbReference>
<dbReference type="InterPro" id="IPR005535">
    <property type="entry name" value="Cyclotide"/>
</dbReference>
<dbReference type="InterPro" id="IPR012323">
    <property type="entry name" value="Cyclotide_bracelet_CS"/>
</dbReference>
<dbReference type="InterPro" id="IPR036146">
    <property type="entry name" value="Cyclotide_sf"/>
</dbReference>
<dbReference type="Pfam" id="PF03784">
    <property type="entry name" value="Cyclotide"/>
    <property type="match status" value="1"/>
</dbReference>
<dbReference type="PIRSF" id="PIRSF037891">
    <property type="entry name" value="Cycloviolacin"/>
    <property type="match status" value="1"/>
</dbReference>
<dbReference type="SUPFAM" id="SSF57038">
    <property type="entry name" value="Cyclotides"/>
    <property type="match status" value="1"/>
</dbReference>
<dbReference type="PROSITE" id="PS51052">
    <property type="entry name" value="CYCLOTIDE"/>
    <property type="match status" value="1"/>
</dbReference>
<dbReference type="PROSITE" id="PS60008">
    <property type="entry name" value="CYCLOTIDE_BRACELET"/>
    <property type="match status" value="1"/>
</dbReference>